<accession>P27544</accession>
<gene>
    <name evidence="13 18" type="primary">CERS1</name>
    <name evidence="15" type="synonym">LAG1</name>
    <name evidence="1" type="synonym">LASS1</name>
    <name evidence="14" type="synonym">UOG1</name>
</gene>
<evidence type="ECO:0000250" key="1">
    <source>
        <dbReference type="UniProtKB" id="P27545"/>
    </source>
</evidence>
<evidence type="ECO:0000255" key="2"/>
<evidence type="ECO:0000255" key="3">
    <source>
        <dbReference type="PROSITE-ProRule" id="PRU00205"/>
    </source>
</evidence>
<evidence type="ECO:0000269" key="4">
    <source>
    </source>
</evidence>
<evidence type="ECO:0000269" key="5">
    <source>
    </source>
</evidence>
<evidence type="ECO:0000269" key="6">
    <source>
    </source>
</evidence>
<evidence type="ECO:0000269" key="7">
    <source>
    </source>
</evidence>
<evidence type="ECO:0000269" key="8">
    <source>
    </source>
</evidence>
<evidence type="ECO:0000269" key="9">
    <source>
    </source>
</evidence>
<evidence type="ECO:0000269" key="10">
    <source>
    </source>
</evidence>
<evidence type="ECO:0000269" key="11">
    <source>
    </source>
</evidence>
<evidence type="ECO:0000303" key="12">
    <source>
    </source>
</evidence>
<evidence type="ECO:0000303" key="13">
    <source>
    </source>
</evidence>
<evidence type="ECO:0000303" key="14">
    <source>
    </source>
</evidence>
<evidence type="ECO:0000303" key="15">
    <source>
    </source>
</evidence>
<evidence type="ECO:0000305" key="16"/>
<evidence type="ECO:0000305" key="17">
    <source>
    </source>
</evidence>
<evidence type="ECO:0000312" key="18">
    <source>
        <dbReference type="HGNC" id="HGNC:14253"/>
    </source>
</evidence>
<evidence type="ECO:0007744" key="19">
    <source>
    </source>
</evidence>
<name>CERS1_HUMAN</name>
<proteinExistence type="evidence at protein level"/>
<feature type="initiator methionine" description="Removed" evidence="19">
    <location>
        <position position="1"/>
    </location>
</feature>
<feature type="chain" id="PRO_0000185507" description="Ceramide synthase 1">
    <location>
        <begin position="2"/>
        <end position="350"/>
    </location>
</feature>
<feature type="transmembrane region" description="Helical" evidence="2">
    <location>
        <begin position="53"/>
        <end position="73"/>
    </location>
</feature>
<feature type="transmembrane region" description="Helical" evidence="2">
    <location>
        <begin position="103"/>
        <end position="123"/>
    </location>
</feature>
<feature type="transmembrane region" description="Helical" evidence="2">
    <location>
        <begin position="148"/>
        <end position="168"/>
    </location>
</feature>
<feature type="transmembrane region" description="Helical" evidence="2">
    <location>
        <begin position="176"/>
        <end position="196"/>
    </location>
</feature>
<feature type="transmembrane region" description="Helical" evidence="2">
    <location>
        <begin position="239"/>
        <end position="259"/>
    </location>
</feature>
<feature type="transmembrane region" description="Helical" evidence="2">
    <location>
        <begin position="287"/>
        <end position="307"/>
    </location>
</feature>
<feature type="domain" description="TLC" evidence="3">
    <location>
        <begin position="97"/>
        <end position="311"/>
    </location>
</feature>
<feature type="modified residue" description="N-acetylalanine" evidence="19">
    <location>
        <position position="2"/>
    </location>
</feature>
<feature type="splice variant" id="VSP_003049" description="In isoform 2." evidence="12">
    <location>
        <begin position="338"/>
        <end position="350"/>
    </location>
</feature>
<feature type="sequence variant" id="VAR_085037" description="In EPM8; uncertain significance." evidence="11">
    <original>L</original>
    <variation>M</variation>
    <location>
        <position position="68"/>
    </location>
</feature>
<feature type="sequence variant" id="VAR_085038" description="In EPM8." evidence="11">
    <location>
        <begin position="70"/>
        <end position="350"/>
    </location>
</feature>
<feature type="sequence variant" id="VAR_073336" description="In EPM8; expressed and localized properly to the ER; impaired ceramide synthase activity; dbSNP:rs200024180." evidence="8">
    <original>H</original>
    <variation>Q</variation>
    <location>
        <position position="183"/>
    </location>
</feature>
<feature type="mutagenesis site" description="Loss of ceramide synthase activity." evidence="6">
    <original>H</original>
    <variation>A</variation>
    <location>
        <position position="183"/>
    </location>
</feature>
<feature type="sequence conflict" description="In Ref. 4; AAH22450." evidence="16" ref="4">
    <original>G</original>
    <variation>C</variation>
    <location>
        <position position="111"/>
    </location>
</feature>
<organism>
    <name type="scientific">Homo sapiens</name>
    <name type="common">Human</name>
    <dbReference type="NCBI Taxonomy" id="9606"/>
    <lineage>
        <taxon>Eukaryota</taxon>
        <taxon>Metazoa</taxon>
        <taxon>Chordata</taxon>
        <taxon>Craniata</taxon>
        <taxon>Vertebrata</taxon>
        <taxon>Euteleostomi</taxon>
        <taxon>Mammalia</taxon>
        <taxon>Eutheria</taxon>
        <taxon>Euarchontoglires</taxon>
        <taxon>Primates</taxon>
        <taxon>Haplorrhini</taxon>
        <taxon>Catarrhini</taxon>
        <taxon>Hominidae</taxon>
        <taxon>Homo</taxon>
    </lineage>
</organism>
<comment type="function">
    <text evidence="1 4 6 7 8 9 10">Ceramide synthase that catalyzes the transfer of the acyl chain from acyl-CoA to a sphingoid base, with high selectivity toward stearoyl-CoA (octadecanoyl-CoA; C18:0-CoA) (PubMed:17977534, PubMed:23530041, PubMed:26887952, PubMed:31916624). N-acylates sphinganine and sphingosine bases to form dihydroceramides and ceramides in de novo synthesis and salvage pathways, respectively (PubMed:17977534, PubMed:23530041, PubMed:24782409, PubMed:26887952, PubMed:31916624). Plays a predominant role in skeletal muscle in regulating C18 ceramide and dihydroceramide levels with an impact on whole-body glucose metabolism and insulin sensitivity. Protects from diet-induced obesity by suppressing the uptake of glucose in multiple organs in a FGF21-dependent way (By similarity). Generates C18 ceramides in the brain, playing a critical role in cerebellar development and Purkinje cell function (By similarity). In response to cellular stress mediates mitophagy, a known defense mechanism against cell transformation and aging. Upon mitochondria fission, generates C18 ceramides that anchor lipidated MAP1LC3B/LC3B-II autophagolysosomes to outer mitochondrial membranes to eliminate damaged mitochondria (PubMed:22922758).</text>
</comment>
<comment type="catalytic activity">
    <reaction evidence="4 7 9 10">
        <text>a sphingoid base + octadecanoyl-CoA = an N-octadecanoyl-sphingoid base + CoA + H(+)</text>
        <dbReference type="Rhea" id="RHEA:61476"/>
        <dbReference type="ChEBI" id="CHEBI:15378"/>
        <dbReference type="ChEBI" id="CHEBI:57287"/>
        <dbReference type="ChEBI" id="CHEBI:57394"/>
        <dbReference type="ChEBI" id="CHEBI:84410"/>
        <dbReference type="ChEBI" id="CHEBI:144711"/>
        <dbReference type="EC" id="2.3.1.299"/>
    </reaction>
    <physiologicalReaction direction="left-to-right" evidence="4 7 9 10">
        <dbReference type="Rhea" id="RHEA:61477"/>
    </physiologicalReaction>
</comment>
<comment type="catalytic activity">
    <reaction evidence="4 7 9">
        <text>sphinganine + octadecanoyl-CoA = N-(octadecanoyl)-sphinganine + CoA + H(+)</text>
        <dbReference type="Rhea" id="RHEA:36547"/>
        <dbReference type="ChEBI" id="CHEBI:15378"/>
        <dbReference type="ChEBI" id="CHEBI:57287"/>
        <dbReference type="ChEBI" id="CHEBI:57394"/>
        <dbReference type="ChEBI" id="CHEBI:57817"/>
        <dbReference type="ChEBI" id="CHEBI:67033"/>
    </reaction>
    <physiologicalReaction direction="left-to-right" evidence="4 7 9">
        <dbReference type="Rhea" id="RHEA:36548"/>
    </physiologicalReaction>
</comment>
<comment type="catalytic activity">
    <reaction evidence="7">
        <text>hexadecasphinganine + octadecanoyl-CoA = N-octadecanoylhexadecasphinganine + CoA + H(+)</text>
        <dbReference type="Rhea" id="RHEA:43044"/>
        <dbReference type="ChEBI" id="CHEBI:15378"/>
        <dbReference type="ChEBI" id="CHEBI:57287"/>
        <dbReference type="ChEBI" id="CHEBI:57394"/>
        <dbReference type="ChEBI" id="CHEBI:71009"/>
        <dbReference type="ChEBI" id="CHEBI:82811"/>
    </reaction>
    <physiologicalReaction direction="left-to-right" evidence="7">
        <dbReference type="Rhea" id="RHEA:43045"/>
    </physiologicalReaction>
</comment>
<comment type="catalytic activity">
    <reaction evidence="10">
        <text>sphing-4-enine + octadecanoyl-CoA = N-octadecanoylsphing-4-enine + CoA + H(+)</text>
        <dbReference type="Rhea" id="RHEA:36691"/>
        <dbReference type="ChEBI" id="CHEBI:15378"/>
        <dbReference type="ChEBI" id="CHEBI:57287"/>
        <dbReference type="ChEBI" id="CHEBI:57394"/>
        <dbReference type="ChEBI" id="CHEBI:57756"/>
        <dbReference type="ChEBI" id="CHEBI:72961"/>
    </reaction>
    <physiologicalReaction direction="left-to-right" evidence="17">
        <dbReference type="Rhea" id="RHEA:36692"/>
    </physiologicalReaction>
</comment>
<comment type="catalytic activity">
    <reaction evidence="1">
        <text>heptadecasphing-4-enine + octadecanoyl-CoA = N-octadecanoyl-heptadecasphing-4-enine + CoA + H(+)</text>
        <dbReference type="Rhea" id="RHEA:67596"/>
        <dbReference type="ChEBI" id="CHEBI:15378"/>
        <dbReference type="ChEBI" id="CHEBI:57287"/>
        <dbReference type="ChEBI" id="CHEBI:57394"/>
        <dbReference type="ChEBI" id="CHEBI:74166"/>
        <dbReference type="ChEBI" id="CHEBI:172405"/>
    </reaction>
    <physiologicalReaction direction="left-to-right" evidence="1">
        <dbReference type="Rhea" id="RHEA:67597"/>
    </physiologicalReaction>
</comment>
<comment type="catalytic activity">
    <reaction evidence="1">
        <text>2-hydroxyoctadecanoyl-CoA + sphinganine = N-(2-hydroxyoctadecanoyl)-sphinganine + CoA + H(+)</text>
        <dbReference type="Rhea" id="RHEA:36615"/>
        <dbReference type="ChEBI" id="CHEBI:15378"/>
        <dbReference type="ChEBI" id="CHEBI:57287"/>
        <dbReference type="ChEBI" id="CHEBI:57817"/>
        <dbReference type="ChEBI" id="CHEBI:67034"/>
        <dbReference type="ChEBI" id="CHEBI:74116"/>
    </reaction>
    <physiologicalReaction direction="left-to-right" evidence="1">
        <dbReference type="Rhea" id="RHEA:36616"/>
    </physiologicalReaction>
</comment>
<comment type="catalytic activity">
    <reaction evidence="1">
        <text>eicosanoyl-CoA + sphinganine = N-eicosanoylsphinganine + CoA + H(+)</text>
        <dbReference type="Rhea" id="RHEA:36555"/>
        <dbReference type="ChEBI" id="CHEBI:15378"/>
        <dbReference type="ChEBI" id="CHEBI:57287"/>
        <dbReference type="ChEBI" id="CHEBI:57380"/>
        <dbReference type="ChEBI" id="CHEBI:57817"/>
        <dbReference type="ChEBI" id="CHEBI:67027"/>
    </reaction>
    <physiologicalReaction direction="left-to-right" evidence="1">
        <dbReference type="Rhea" id="RHEA:36556"/>
    </physiologicalReaction>
</comment>
<comment type="activity regulation">
    <text evidence="1">Inhibited by fumonisin B1.</text>
</comment>
<comment type="pathway">
    <text evidence="4 7 9">Lipid metabolism; sphingolipid metabolism.</text>
</comment>
<comment type="subcellular location">
    <subcellularLocation>
        <location evidence="8">Endoplasmic reticulum membrane</location>
        <topology evidence="2">Multi-pass membrane protein</topology>
    </subcellularLocation>
</comment>
<comment type="alternative products">
    <event type="alternative splicing"/>
    <isoform>
        <id>P27544-1</id>
        <name>1</name>
        <sequence type="displayed"/>
    </isoform>
    <isoform>
        <id>P27544-2</id>
        <name>2</name>
        <sequence type="described" ref="VSP_003049"/>
    </isoform>
</comment>
<comment type="PTM">
    <text evidence="1">Acetylated. Deacetylation by SIRT3 increases enzyme activity and promotes mitochondrial ceramide accumulation.</text>
</comment>
<comment type="disease" evidence="8 11">
    <disease id="DI-04341">
        <name>Epilepsy, progressive myoclonic 8</name>
        <acronym>EPM8</acronym>
        <description>A form of progressive myoclonic epilepsy, a clinically and genetically heterogeneous group of disorders defined by the combination of action and reflex myoclonus, other types of epileptic seizures, and progressive neurodegeneration and neurocognitive impairment. EPM8 is an autosomal recessive form characterized by myoclonus, generalized tonic-clonic seizures and moderate to severe cognitive impairment.</description>
        <dbReference type="MIM" id="616230"/>
    </disease>
    <text>The disease is caused by variants affecting the gene represented in this entry.</text>
</comment>
<comment type="miscellaneous">
    <text evidence="5">This protein is produced by a bicistronic gene which also produces the GDF1 protein from a non-overlapping reading frame.</text>
</comment>
<protein>
    <recommendedName>
        <fullName evidence="13">Ceramide synthase 1</fullName>
        <shortName evidence="13">CerS1</shortName>
    </recommendedName>
    <alternativeName>
        <fullName evidence="15">LAG1 longevity assurance homolog 1</fullName>
    </alternativeName>
    <alternativeName>
        <fullName evidence="1">Longevity assurance gene 1 protein homolog 1</fullName>
    </alternativeName>
    <alternativeName>
        <fullName evidence="14">Protein UOG-1</fullName>
    </alternativeName>
    <alternativeName>
        <fullName evidence="16">Sphingoid base N-stearoyltransferase CERS1</fullName>
        <ecNumber evidence="4 7 9 10">2.3.1.299</ecNumber>
    </alternativeName>
</protein>
<reference key="1">
    <citation type="journal article" date="1991" name="Proc. Natl. Acad. Sci. U.S.A.">
        <title>Expression of growth/differentiation factor 1 in the nervous system: conservation of a bicistronic structure.</title>
        <authorList>
            <person name="Lee S.-J."/>
        </authorList>
    </citation>
    <scope>NUCLEOTIDE SEQUENCE [MRNA] (ISOFORM 1)</scope>
</reference>
<reference key="2">
    <citation type="journal article" date="1998" name="Genome Res.">
        <title>Homologs of the yeast longevity gene LAG1 in Caenorhabditis elegans and human.</title>
        <authorList>
            <person name="Jiang J.C."/>
            <person name="Kirchman P.A."/>
            <person name="Zagulski M."/>
            <person name="Hunt J."/>
            <person name="Jazwinski S.M."/>
        </authorList>
    </citation>
    <scope>NUCLEOTIDE SEQUENCE [GENOMIC DNA] (ISOFORM 1)</scope>
</reference>
<reference key="3">
    <citation type="journal article" date="2004" name="Nature">
        <title>The DNA sequence and biology of human chromosome 19.</title>
        <authorList>
            <person name="Grimwood J."/>
            <person name="Gordon L.A."/>
            <person name="Olsen A.S."/>
            <person name="Terry A."/>
            <person name="Schmutz J."/>
            <person name="Lamerdin J.E."/>
            <person name="Hellsten U."/>
            <person name="Goodstein D."/>
            <person name="Couronne O."/>
            <person name="Tran-Gyamfi M."/>
            <person name="Aerts A."/>
            <person name="Altherr M."/>
            <person name="Ashworth L."/>
            <person name="Bajorek E."/>
            <person name="Black S."/>
            <person name="Branscomb E."/>
            <person name="Caenepeel S."/>
            <person name="Carrano A.V."/>
            <person name="Caoile C."/>
            <person name="Chan Y.M."/>
            <person name="Christensen M."/>
            <person name="Cleland C.A."/>
            <person name="Copeland A."/>
            <person name="Dalin E."/>
            <person name="Dehal P."/>
            <person name="Denys M."/>
            <person name="Detter J.C."/>
            <person name="Escobar J."/>
            <person name="Flowers D."/>
            <person name="Fotopulos D."/>
            <person name="Garcia C."/>
            <person name="Georgescu A.M."/>
            <person name="Glavina T."/>
            <person name="Gomez M."/>
            <person name="Gonzales E."/>
            <person name="Groza M."/>
            <person name="Hammon N."/>
            <person name="Hawkins T."/>
            <person name="Haydu L."/>
            <person name="Ho I."/>
            <person name="Huang W."/>
            <person name="Israni S."/>
            <person name="Jett J."/>
            <person name="Kadner K."/>
            <person name="Kimball H."/>
            <person name="Kobayashi A."/>
            <person name="Larionov V."/>
            <person name="Leem S.-H."/>
            <person name="Lopez F."/>
            <person name="Lou Y."/>
            <person name="Lowry S."/>
            <person name="Malfatti S."/>
            <person name="Martinez D."/>
            <person name="McCready P.M."/>
            <person name="Medina C."/>
            <person name="Morgan J."/>
            <person name="Nelson K."/>
            <person name="Nolan M."/>
            <person name="Ovcharenko I."/>
            <person name="Pitluck S."/>
            <person name="Pollard M."/>
            <person name="Popkie A.P."/>
            <person name="Predki P."/>
            <person name="Quan G."/>
            <person name="Ramirez L."/>
            <person name="Rash S."/>
            <person name="Retterer J."/>
            <person name="Rodriguez A."/>
            <person name="Rogers S."/>
            <person name="Salamov A."/>
            <person name="Salazar A."/>
            <person name="She X."/>
            <person name="Smith D."/>
            <person name="Slezak T."/>
            <person name="Solovyev V."/>
            <person name="Thayer N."/>
            <person name="Tice H."/>
            <person name="Tsai M."/>
            <person name="Ustaszewska A."/>
            <person name="Vo N."/>
            <person name="Wagner M."/>
            <person name="Wheeler J."/>
            <person name="Wu K."/>
            <person name="Xie G."/>
            <person name="Yang J."/>
            <person name="Dubchak I."/>
            <person name="Furey T.S."/>
            <person name="DeJong P."/>
            <person name="Dickson M."/>
            <person name="Gordon D."/>
            <person name="Eichler E.E."/>
            <person name="Pennacchio L.A."/>
            <person name="Richardson P."/>
            <person name="Stubbs L."/>
            <person name="Rokhsar D.S."/>
            <person name="Myers R.M."/>
            <person name="Rubin E.M."/>
            <person name="Lucas S.M."/>
        </authorList>
    </citation>
    <scope>NUCLEOTIDE SEQUENCE [LARGE SCALE GENOMIC DNA]</scope>
</reference>
<reference key="4">
    <citation type="journal article" date="2004" name="Genome Res.">
        <title>The status, quality, and expansion of the NIH full-length cDNA project: the Mammalian Gene Collection (MGC).</title>
        <authorList>
            <consortium name="The MGC Project Team"/>
        </authorList>
    </citation>
    <scope>NUCLEOTIDE SEQUENCE [LARGE SCALE MRNA] (ISOFORM 2)</scope>
    <source>
        <tissue>Hypothalamus</tissue>
    </source>
</reference>
<reference key="5">
    <citation type="journal article" date="2007" name="FEBS Lett.">
        <title>Kinetic characterization of mammalian ceramide synthases: determination of K(m) values towards sphinganine.</title>
        <authorList>
            <person name="Lahiri S."/>
            <person name="Lee H."/>
            <person name="Mesicek J."/>
            <person name="Fuks Z."/>
            <person name="Haimovitz-Friedman A."/>
            <person name="Kolesnick R.N."/>
            <person name="Futerman A.H."/>
        </authorList>
    </citation>
    <scope>FUNCTION</scope>
    <scope>CATALYTIC ACTIVITY</scope>
    <scope>PATHWAY</scope>
</reference>
<reference key="6">
    <citation type="journal article" date="2012" name="Mol. Cell. Proteomics">
        <title>Comparative large-scale characterisation of plant vs. mammal proteins reveals similar and idiosyncratic N-alpha acetylation features.</title>
        <authorList>
            <person name="Bienvenut W.V."/>
            <person name="Sumpton D."/>
            <person name="Martinez A."/>
            <person name="Lilla S."/>
            <person name="Espagne C."/>
            <person name="Meinnel T."/>
            <person name="Giglione C."/>
        </authorList>
    </citation>
    <scope>ACETYLATION [LARGE SCALE ANALYSIS] AT ALA-2</scope>
    <scope>CLEAVAGE OF INITIATOR METHIONINE [LARGE SCALE ANALYSIS]</scope>
    <scope>IDENTIFICATION BY MASS SPECTROMETRY [LARGE SCALE ANALYSIS]</scope>
</reference>
<reference key="7">
    <citation type="journal article" date="2012" name="Nat. Chem. Biol.">
        <title>Ceramide targets autophagosomes to mitochondria and induces lethal mitophagy.</title>
        <authorList>
            <person name="Sentelle R.D."/>
            <person name="Senkal C.E."/>
            <person name="Jiang W."/>
            <person name="Ponnusamy S."/>
            <person name="Gencer S."/>
            <person name="Selvam S.P."/>
            <person name="Ramshesh V.K."/>
            <person name="Peterson Y.K."/>
            <person name="Lemasters J.J."/>
            <person name="Szulc Z.M."/>
            <person name="Bielawski J."/>
            <person name="Ogretmen B."/>
        </authorList>
    </citation>
    <scope>FUNCTION</scope>
    <scope>MUTAGENESIS OF HIS-183</scope>
</reference>
<reference key="8">
    <citation type="journal article" date="2013" name="J. Biol. Chem.">
        <title>Myristate-derived d16:0 sphingolipids constitute a cardiac sphingolipid pool with distinct synthetic routes and functional properties.</title>
        <authorList>
            <person name="Russo S.B."/>
            <person name="Tidhar R."/>
            <person name="Futerman A.H."/>
            <person name="Cowart L.A."/>
        </authorList>
    </citation>
    <scope>FUNCTION</scope>
    <scope>CATALYTIC ACTIVITY</scope>
    <scope>PATHWAY</scope>
</reference>
<reference key="9">
    <citation type="journal article" date="2014" name="Ann. Neurol.">
        <title>Impairment of ceramide synthesis causes a novel progressive myoclonus epilepsy.</title>
        <authorList>
            <person name="Vanni N."/>
            <person name="Fruscione F."/>
            <person name="Ferlazzo E."/>
            <person name="Striano P."/>
            <person name="Robbiano A."/>
            <person name="Traverso M."/>
            <person name="Sander T."/>
            <person name="Falace A."/>
            <person name="Gazzerro E."/>
            <person name="Bramanti P."/>
            <person name="Bielawski J."/>
            <person name="Fassio A."/>
            <person name="Minetti C."/>
            <person name="Genton P."/>
            <person name="Zara F."/>
        </authorList>
    </citation>
    <scope>FUNCTION</scope>
    <scope>SUBCELLULAR LOCATION</scope>
    <scope>PATHWAY</scope>
    <scope>INVOLVEMENT IN EPM8</scope>
    <scope>VARIANT EPM8 GLN-183</scope>
    <scope>CHARACTERIZATION OF VARIANT EPM8 GLN-183</scope>
</reference>
<reference key="10">
    <citation type="journal article" date="2016" name="J. Biol. Chem.">
        <title>Enzyme activities of the ceramide synthases CERS2-6 are regulated by phosphorylation in the C-terminal region.</title>
        <authorList>
            <person name="Sassa T."/>
            <person name="Hirayama T."/>
            <person name="Kihara A."/>
        </authorList>
    </citation>
    <scope>FUNCTION</scope>
    <scope>CATALYTIC ACTIVITY</scope>
    <scope>PATHWAY</scope>
</reference>
<reference key="11">
    <citation type="journal article" date="2020" name="FASEB J.">
        <title>Biosynthesis of the anti-lipid-microdomain sphingoid base 4,14-sphingadiene by the ceramide desaturase FADS3.</title>
        <authorList>
            <person name="Jojima K."/>
            <person name="Edagawa M."/>
            <person name="Sawai M."/>
            <person name="Ohno Y."/>
            <person name="Kihara A."/>
        </authorList>
    </citation>
    <scope>FUNCTION</scope>
    <scope>CATALYTIC ACTIVITY</scope>
</reference>
<reference key="12">
    <citation type="journal article" date="2021" name="Am. J. Hum. Genet.">
        <title>Progressive myoclonus epilepsies-Residual unsolved cases have marked genetic heterogeneity including dolichol-dependent protein glycosylation pathway genes.</title>
        <authorList>
            <person name="Courage C."/>
            <person name="Oliver K.L."/>
            <person name="Park E.J."/>
            <person name="Cameron J.M."/>
            <person name="Grabinska K.A."/>
            <person name="Muona M."/>
            <person name="Canafoglia L."/>
            <person name="Gambardella A."/>
            <person name="Said E."/>
            <person name="Afawi Z."/>
            <person name="Baykan B."/>
            <person name="Brandt C."/>
            <person name="di Bonaventura C."/>
            <person name="Chew H.B."/>
            <person name="Criscuolo C."/>
            <person name="Dibbens L.M."/>
            <person name="Castellotti B."/>
            <person name="Riguzzi P."/>
            <person name="Labate A."/>
            <person name="Filla A."/>
            <person name="Giallonardo A.T."/>
            <person name="Berecki G."/>
            <person name="Jackson C.B."/>
            <person name="Joensuu T."/>
            <person name="Damiano J.A."/>
            <person name="Kivity S."/>
            <person name="Korczyn A."/>
            <person name="Palotie A."/>
            <person name="Striano P."/>
            <person name="Uccellini D."/>
            <person name="Giuliano L."/>
            <person name="Andermann E."/>
            <person name="Scheffer I.E."/>
            <person name="Michelucci R."/>
            <person name="Bahlo M."/>
            <person name="Franceschetti S."/>
            <person name="Sessa W.C."/>
            <person name="Berkovic S.F."/>
            <person name="Lehesjoki A.E."/>
        </authorList>
    </citation>
    <scope>VARIANTS EPM8 MET-68 AND 70-TRP--PHE-350 DEL</scope>
</reference>
<dbReference type="EC" id="2.3.1.299" evidence="4 7 9 10"/>
<dbReference type="EMBL" id="M62302">
    <property type="protein sequence ID" value="AAA58500.1"/>
    <property type="molecule type" value="mRNA"/>
</dbReference>
<dbReference type="EMBL" id="AF105009">
    <property type="protein sequence ID" value="AAD16892.1"/>
    <property type="molecule type" value="Genomic_DNA"/>
</dbReference>
<dbReference type="EMBL" id="AF105005">
    <property type="protein sequence ID" value="AAD16892.1"/>
    <property type="status" value="JOINED"/>
    <property type="molecule type" value="Genomic_DNA"/>
</dbReference>
<dbReference type="EMBL" id="AF105006">
    <property type="protein sequence ID" value="AAD16892.1"/>
    <property type="status" value="JOINED"/>
    <property type="molecule type" value="Genomic_DNA"/>
</dbReference>
<dbReference type="EMBL" id="AF105007">
    <property type="protein sequence ID" value="AAD16892.1"/>
    <property type="status" value="JOINED"/>
    <property type="molecule type" value="Genomic_DNA"/>
</dbReference>
<dbReference type="EMBL" id="AF105008">
    <property type="protein sequence ID" value="AAD16892.1"/>
    <property type="status" value="JOINED"/>
    <property type="molecule type" value="Genomic_DNA"/>
</dbReference>
<dbReference type="EMBL" id="AC005197">
    <property type="protein sequence ID" value="AAC24611.1"/>
    <property type="molecule type" value="Genomic_DNA"/>
</dbReference>
<dbReference type="EMBL" id="AC003972">
    <property type="status" value="NOT_ANNOTATED_CDS"/>
    <property type="molecule type" value="Genomic_DNA"/>
</dbReference>
<dbReference type="EMBL" id="BC022450">
    <property type="protein sequence ID" value="AAH22450.1"/>
    <property type="molecule type" value="mRNA"/>
</dbReference>
<dbReference type="CCDS" id="CCDS46020.1">
    <molecule id="P27544-1"/>
</dbReference>
<dbReference type="CCDS" id="CCDS46021.1">
    <molecule id="P27544-2"/>
</dbReference>
<dbReference type="PIR" id="D39364">
    <property type="entry name" value="D39364"/>
</dbReference>
<dbReference type="RefSeq" id="NP_001374369.1">
    <molecule id="P27544-1"/>
    <property type="nucleotide sequence ID" value="NM_001387440.1"/>
</dbReference>
<dbReference type="RefSeq" id="NP_067090.1">
    <molecule id="P27544-1"/>
    <property type="nucleotide sequence ID" value="NM_021267.5"/>
</dbReference>
<dbReference type="RefSeq" id="NP_937850.1">
    <molecule id="P27544-2"/>
    <property type="nucleotide sequence ID" value="NM_198207.3"/>
</dbReference>
<dbReference type="SMR" id="P27544"/>
<dbReference type="BioGRID" id="115941">
    <property type="interactions" value="34"/>
</dbReference>
<dbReference type="FunCoup" id="P27544">
    <property type="interactions" value="416"/>
</dbReference>
<dbReference type="IntAct" id="P27544">
    <property type="interactions" value="11"/>
</dbReference>
<dbReference type="MINT" id="P27544"/>
<dbReference type="BindingDB" id="P27544"/>
<dbReference type="ChEMBL" id="CHEMBL5291526"/>
<dbReference type="SwissLipids" id="SLP:000000698"/>
<dbReference type="GlyGen" id="P27544">
    <property type="glycosylation" value="1 site"/>
</dbReference>
<dbReference type="iPTMnet" id="P27544"/>
<dbReference type="PhosphoSitePlus" id="P27544"/>
<dbReference type="SwissPalm" id="P27544"/>
<dbReference type="BioMuta" id="CERS1"/>
<dbReference type="DMDM" id="137046"/>
<dbReference type="jPOST" id="P27544"/>
<dbReference type="MassIVE" id="P27544"/>
<dbReference type="PeptideAtlas" id="P27544"/>
<dbReference type="ProteomicsDB" id="54401">
    <molecule id="P27544-1"/>
</dbReference>
<dbReference type="ProteomicsDB" id="54402">
    <molecule id="P27544-2"/>
</dbReference>
<dbReference type="Pumba" id="P27544"/>
<dbReference type="Antibodypedia" id="28219">
    <property type="antibodies" value="227 antibodies from 29 providers"/>
</dbReference>
<dbReference type="DNASU" id="10715"/>
<dbReference type="Ensembl" id="ENST00000429504.6">
    <molecule id="P27544-2"/>
    <property type="protein sequence ID" value="ENSP00000389044.1"/>
    <property type="gene ID" value="ENSG00000223802.9"/>
</dbReference>
<dbReference type="Ensembl" id="ENST00000623882.4">
    <molecule id="P27544-1"/>
    <property type="protein sequence ID" value="ENSP00000485308.1"/>
    <property type="gene ID" value="ENSG00000223802.9"/>
</dbReference>
<dbReference type="GeneID" id="10715"/>
<dbReference type="KEGG" id="hsa:10715"/>
<dbReference type="MANE-Select" id="ENST00000623882.4">
    <property type="protein sequence ID" value="ENSP00000485308.1"/>
    <property type="RefSeq nucleotide sequence ID" value="NM_021267.5"/>
    <property type="RefSeq protein sequence ID" value="NP_067090.1"/>
</dbReference>
<dbReference type="UCSC" id="uc002nki.2">
    <molecule id="P27544-1"/>
    <property type="organism name" value="human"/>
</dbReference>
<dbReference type="AGR" id="HGNC:14253"/>
<dbReference type="CTD" id="10715"/>
<dbReference type="DisGeNET" id="10715"/>
<dbReference type="GeneCards" id="CERS1"/>
<dbReference type="HGNC" id="HGNC:14253">
    <property type="gene designation" value="CERS1"/>
</dbReference>
<dbReference type="HPA" id="ENSG00000223802">
    <property type="expression patterns" value="Tissue enriched (brain)"/>
</dbReference>
<dbReference type="MalaCards" id="CERS1"/>
<dbReference type="MIM" id="606919">
    <property type="type" value="gene"/>
</dbReference>
<dbReference type="MIM" id="616230">
    <property type="type" value="phenotype"/>
</dbReference>
<dbReference type="neXtProt" id="NX_P27544"/>
<dbReference type="OpenTargets" id="ENSG00000223802"/>
<dbReference type="Orphanet" id="424027">
    <property type="disease" value="Progressive myoclonic epilepsy type 8"/>
</dbReference>
<dbReference type="PharmGKB" id="PA30299"/>
<dbReference type="VEuPathDB" id="HostDB:ENSG00000223802"/>
<dbReference type="GeneTree" id="ENSGT01030000234515"/>
<dbReference type="HOGENOM" id="CLU_028277_0_0_1"/>
<dbReference type="InParanoid" id="P27544"/>
<dbReference type="OMA" id="HVLNLKI"/>
<dbReference type="OrthoDB" id="537032at2759"/>
<dbReference type="PAN-GO" id="P27544">
    <property type="GO annotations" value="3 GO annotations based on evolutionary models"/>
</dbReference>
<dbReference type="PhylomeDB" id="P27544"/>
<dbReference type="TreeFam" id="TF314319"/>
<dbReference type="BioCyc" id="MetaCyc:MONOMER66-34367"/>
<dbReference type="BRENDA" id="2.3.1.299">
    <property type="organism ID" value="2681"/>
</dbReference>
<dbReference type="PathwayCommons" id="P27544"/>
<dbReference type="Reactome" id="R-HSA-1660661">
    <property type="pathway name" value="Sphingolipid de novo biosynthesis"/>
</dbReference>
<dbReference type="SignaLink" id="P27544"/>
<dbReference type="SIGNOR" id="P27544"/>
<dbReference type="UniPathway" id="UPA00222"/>
<dbReference type="BioGRID-ORCS" id="10715">
    <property type="hits" value="54 hits in 1082 CRISPR screens"/>
</dbReference>
<dbReference type="ChiTaRS" id="CERS1">
    <property type="organism name" value="human"/>
</dbReference>
<dbReference type="GeneWiki" id="LASS1"/>
<dbReference type="GenomeRNAi" id="10715"/>
<dbReference type="Pharos" id="P27544">
    <property type="development level" value="Tbio"/>
</dbReference>
<dbReference type="PRO" id="PR:P27544"/>
<dbReference type="Proteomes" id="UP000005640">
    <property type="component" value="Chromosome 19"/>
</dbReference>
<dbReference type="RNAct" id="P27544">
    <property type="molecule type" value="protein"/>
</dbReference>
<dbReference type="Bgee" id="ENSG00000223802">
    <property type="expression patterns" value="Expressed in C1 segment of cervical spinal cord and 137 other cell types or tissues"/>
</dbReference>
<dbReference type="ExpressionAtlas" id="P27544">
    <property type="expression patterns" value="baseline and differential"/>
</dbReference>
<dbReference type="GO" id="GO:0005783">
    <property type="term" value="C:endoplasmic reticulum"/>
    <property type="evidence" value="ECO:0000314"/>
    <property type="project" value="UniProtKB"/>
</dbReference>
<dbReference type="GO" id="GO:0005789">
    <property type="term" value="C:endoplasmic reticulum membrane"/>
    <property type="evidence" value="ECO:0000304"/>
    <property type="project" value="Reactome"/>
</dbReference>
<dbReference type="GO" id="GO:0043231">
    <property type="term" value="C:intracellular membrane-bounded organelle"/>
    <property type="evidence" value="ECO:0000250"/>
    <property type="project" value="HGNC"/>
</dbReference>
<dbReference type="GO" id="GO:0016020">
    <property type="term" value="C:membrane"/>
    <property type="evidence" value="ECO:0000304"/>
    <property type="project" value="UniProtKB"/>
</dbReference>
<dbReference type="GO" id="GO:0050291">
    <property type="term" value="F:sphingosine N-acyltransferase activity"/>
    <property type="evidence" value="ECO:0000314"/>
    <property type="project" value="UniProtKB"/>
</dbReference>
<dbReference type="GO" id="GO:0007420">
    <property type="term" value="P:brain development"/>
    <property type="evidence" value="ECO:0007669"/>
    <property type="project" value="Ensembl"/>
</dbReference>
<dbReference type="GO" id="GO:0072721">
    <property type="term" value="P:cellular response to dithiothreitol"/>
    <property type="evidence" value="ECO:0000314"/>
    <property type="project" value="UniProtKB"/>
</dbReference>
<dbReference type="GO" id="GO:0036146">
    <property type="term" value="P:cellular response to mycotoxin"/>
    <property type="evidence" value="ECO:0000314"/>
    <property type="project" value="UniProtKB"/>
</dbReference>
<dbReference type="GO" id="GO:0071492">
    <property type="term" value="P:cellular response to UV-A"/>
    <property type="evidence" value="ECO:0000314"/>
    <property type="project" value="UniProtKB"/>
</dbReference>
<dbReference type="GO" id="GO:0071466">
    <property type="term" value="P:cellular response to xenobiotic stimulus"/>
    <property type="evidence" value="ECO:0000314"/>
    <property type="project" value="UniProtKB"/>
</dbReference>
<dbReference type="GO" id="GO:0046513">
    <property type="term" value="P:ceramide biosynthetic process"/>
    <property type="evidence" value="ECO:0000314"/>
    <property type="project" value="UniProtKB"/>
</dbReference>
<dbReference type="GO" id="GO:0010614">
    <property type="term" value="P:negative regulation of cardiac muscle hypertrophy"/>
    <property type="evidence" value="ECO:0007669"/>
    <property type="project" value="Ensembl"/>
</dbReference>
<dbReference type="GO" id="GO:0046325">
    <property type="term" value="P:negative regulation of D-glucose import"/>
    <property type="evidence" value="ECO:0007669"/>
    <property type="project" value="Ensembl"/>
</dbReference>
<dbReference type="GO" id="GO:1901526">
    <property type="term" value="P:positive regulation of mitophagy"/>
    <property type="evidence" value="ECO:0000314"/>
    <property type="project" value="UniProtKB"/>
</dbReference>
<dbReference type="GO" id="GO:0030148">
    <property type="term" value="P:sphingolipid biosynthetic process"/>
    <property type="evidence" value="ECO:0000314"/>
    <property type="project" value="UniProtKB"/>
</dbReference>
<dbReference type="InterPro" id="IPR016439">
    <property type="entry name" value="Lag1/Lac1-like"/>
</dbReference>
<dbReference type="InterPro" id="IPR006634">
    <property type="entry name" value="TLC-dom"/>
</dbReference>
<dbReference type="PANTHER" id="PTHR12560:SF58">
    <property type="entry name" value="CERAMIDE SYNTHASE 1"/>
    <property type="match status" value="1"/>
</dbReference>
<dbReference type="PANTHER" id="PTHR12560">
    <property type="entry name" value="LONGEVITY ASSURANCE FACTOR 1 LAG1"/>
    <property type="match status" value="1"/>
</dbReference>
<dbReference type="Pfam" id="PF03798">
    <property type="entry name" value="TRAM_LAG1_CLN8"/>
    <property type="match status" value="1"/>
</dbReference>
<dbReference type="SMART" id="SM00724">
    <property type="entry name" value="TLC"/>
    <property type="match status" value="1"/>
</dbReference>
<dbReference type="PROSITE" id="PS50922">
    <property type="entry name" value="TLC"/>
    <property type="match status" value="1"/>
</dbReference>
<keyword id="KW-0007">Acetylation</keyword>
<keyword id="KW-0025">Alternative splicing</keyword>
<keyword id="KW-0225">Disease variant</keyword>
<keyword id="KW-0256">Endoplasmic reticulum</keyword>
<keyword id="KW-0887">Epilepsy</keyword>
<keyword id="KW-0444">Lipid biosynthesis</keyword>
<keyword id="KW-0443">Lipid metabolism</keyword>
<keyword id="KW-0472">Membrane</keyword>
<keyword id="KW-0523">Neurodegeneration</keyword>
<keyword id="KW-1267">Proteomics identification</keyword>
<keyword id="KW-1185">Reference proteome</keyword>
<keyword id="KW-0808">Transferase</keyword>
<keyword id="KW-0812">Transmembrane</keyword>
<keyword id="KW-1133">Transmembrane helix</keyword>
<sequence>MAAAGPAAGPTGPEPMPSYAQLVQRGWGSALAAARGCTDCGWGLARRGLAEHAHLAPPELLLLALGALGWTALRSAATARLFRPLAKRCCLQPRDAAKMPESAWKFLFYLGSWSYSAYLLFGTDYPFFHDPPSVFYDWTPGMAVPRDIAAAYLLQGSFYGHSIYATLYMDTWRKDSVVMLLHHVVTLILIVSSYAFRYHNVGILVLFLHDISDVQLEFTKLNIYFKSRGGSYHRLHALAADLGCLSFGFSWFWFRLYWFPLKVLYATSHCSLRTVPDIPFYFFFNALLLLLTLMNLYWFLYIVAFAAKVLTGQVHELKDLREYDTAEAQSLKPSKAEKPLRNGLVKDKRF</sequence>